<name>CALM_NEUCR</name>
<feature type="initiator methionine" description="Removed" evidence="1">
    <location>
        <position position="1"/>
    </location>
</feature>
<feature type="chain" id="PRO_0000198321" description="Calmodulin">
    <location>
        <begin position="2"/>
        <end position="149"/>
    </location>
</feature>
<feature type="domain" description="EF-hand 1" evidence="2">
    <location>
        <begin position="8"/>
        <end position="43"/>
    </location>
</feature>
<feature type="domain" description="EF-hand 2" evidence="2">
    <location>
        <begin position="44"/>
        <end position="79"/>
    </location>
</feature>
<feature type="domain" description="EF-hand 3" evidence="2">
    <location>
        <begin position="81"/>
        <end position="116"/>
    </location>
</feature>
<feature type="domain" description="EF-hand 4" evidence="2">
    <location>
        <begin position="117"/>
        <end position="149"/>
    </location>
</feature>
<feature type="binding site" evidence="2">
    <location>
        <position position="21"/>
    </location>
    <ligand>
        <name>Ca(2+)</name>
        <dbReference type="ChEBI" id="CHEBI:29108"/>
        <label>1</label>
    </ligand>
</feature>
<feature type="binding site" evidence="2">
    <location>
        <position position="23"/>
    </location>
    <ligand>
        <name>Ca(2+)</name>
        <dbReference type="ChEBI" id="CHEBI:29108"/>
        <label>1</label>
    </ligand>
</feature>
<feature type="binding site" evidence="2">
    <location>
        <position position="25"/>
    </location>
    <ligand>
        <name>Ca(2+)</name>
        <dbReference type="ChEBI" id="CHEBI:29108"/>
        <label>1</label>
    </ligand>
</feature>
<feature type="binding site" evidence="2">
    <location>
        <position position="27"/>
    </location>
    <ligand>
        <name>Ca(2+)</name>
        <dbReference type="ChEBI" id="CHEBI:29108"/>
        <label>1</label>
    </ligand>
</feature>
<feature type="binding site" evidence="2">
    <location>
        <position position="32"/>
    </location>
    <ligand>
        <name>Ca(2+)</name>
        <dbReference type="ChEBI" id="CHEBI:29108"/>
        <label>1</label>
    </ligand>
</feature>
<feature type="binding site" evidence="2">
    <location>
        <position position="57"/>
    </location>
    <ligand>
        <name>Ca(2+)</name>
        <dbReference type="ChEBI" id="CHEBI:29108"/>
        <label>2</label>
    </ligand>
</feature>
<feature type="binding site" evidence="2">
    <location>
        <position position="59"/>
    </location>
    <ligand>
        <name>Ca(2+)</name>
        <dbReference type="ChEBI" id="CHEBI:29108"/>
        <label>2</label>
    </ligand>
</feature>
<feature type="binding site" evidence="2">
    <location>
        <position position="61"/>
    </location>
    <ligand>
        <name>Ca(2+)</name>
        <dbReference type="ChEBI" id="CHEBI:29108"/>
        <label>2</label>
    </ligand>
</feature>
<feature type="binding site" evidence="2">
    <location>
        <position position="63"/>
    </location>
    <ligand>
        <name>Ca(2+)</name>
        <dbReference type="ChEBI" id="CHEBI:29108"/>
        <label>2</label>
    </ligand>
</feature>
<feature type="binding site" evidence="2">
    <location>
        <position position="68"/>
    </location>
    <ligand>
        <name>Ca(2+)</name>
        <dbReference type="ChEBI" id="CHEBI:29108"/>
        <label>2</label>
    </ligand>
</feature>
<feature type="binding site" evidence="2">
    <location>
        <position position="94"/>
    </location>
    <ligand>
        <name>Ca(2+)</name>
        <dbReference type="ChEBI" id="CHEBI:29108"/>
        <label>3</label>
    </ligand>
</feature>
<feature type="binding site" evidence="2">
    <location>
        <position position="96"/>
    </location>
    <ligand>
        <name>Ca(2+)</name>
        <dbReference type="ChEBI" id="CHEBI:29108"/>
        <label>3</label>
    </ligand>
</feature>
<feature type="binding site" evidence="2">
    <location>
        <position position="98"/>
    </location>
    <ligand>
        <name>Ca(2+)</name>
        <dbReference type="ChEBI" id="CHEBI:29108"/>
        <label>3</label>
    </ligand>
</feature>
<feature type="binding site" evidence="2">
    <location>
        <position position="105"/>
    </location>
    <ligand>
        <name>Ca(2+)</name>
        <dbReference type="ChEBI" id="CHEBI:29108"/>
        <label>3</label>
    </ligand>
</feature>
<feature type="binding site" evidence="2">
    <location>
        <position position="130"/>
    </location>
    <ligand>
        <name>Ca(2+)</name>
        <dbReference type="ChEBI" id="CHEBI:29108"/>
        <label>4</label>
    </ligand>
</feature>
<feature type="binding site" evidence="2">
    <location>
        <position position="132"/>
    </location>
    <ligand>
        <name>Ca(2+)</name>
        <dbReference type="ChEBI" id="CHEBI:29108"/>
        <label>4</label>
    </ligand>
</feature>
<feature type="binding site" evidence="2">
    <location>
        <position position="134"/>
    </location>
    <ligand>
        <name>Ca(2+)</name>
        <dbReference type="ChEBI" id="CHEBI:29108"/>
        <label>4</label>
    </ligand>
</feature>
<feature type="binding site" evidence="2">
    <location>
        <position position="136"/>
    </location>
    <ligand>
        <name>Ca(2+)</name>
        <dbReference type="ChEBI" id="CHEBI:29108"/>
        <label>4</label>
    </ligand>
</feature>
<feature type="binding site" evidence="2">
    <location>
        <position position="141"/>
    </location>
    <ligand>
        <name>Ca(2+)</name>
        <dbReference type="ChEBI" id="CHEBI:29108"/>
        <label>4</label>
    </ligand>
</feature>
<feature type="modified residue" description="N-acetylalanine" evidence="1">
    <location>
        <position position="2"/>
    </location>
</feature>
<feature type="sequence conflict" description="In Ref. 1; AAA33569." evidence="3" ref="1">
    <original>R</original>
    <variation>L</variation>
    <location>
        <position position="38"/>
    </location>
</feature>
<keyword id="KW-0007">Acetylation</keyword>
<keyword id="KW-0106">Calcium</keyword>
<keyword id="KW-0479">Metal-binding</keyword>
<keyword id="KW-1185">Reference proteome</keyword>
<keyword id="KW-0677">Repeat</keyword>
<gene>
    <name type="primary">cmd-1</name>
    <name type="synonym">cmd1</name>
    <name type="ORF">94C8.160</name>
    <name type="ORF">NCU04120</name>
</gene>
<accession>P61859</accession>
<accession>P40907</accession>
<accession>Q02052</accession>
<accession>Q7RVV3</accession>
<proteinExistence type="evidence at protein level"/>
<dbReference type="EMBL" id="L02964">
    <property type="protein sequence ID" value="AAA33564.1"/>
    <property type="molecule type" value="Genomic_DNA"/>
</dbReference>
<dbReference type="EMBL" id="L02963">
    <property type="protein sequence ID" value="AAA33569.1"/>
    <property type="molecule type" value="mRNA"/>
</dbReference>
<dbReference type="EMBL" id="X70923">
    <property type="protein sequence ID" value="CAA50271.1"/>
    <property type="molecule type" value="mRNA"/>
</dbReference>
<dbReference type="EMBL" id="AL807366">
    <property type="protein sequence ID" value="CAD36980.1"/>
    <property type="molecule type" value="Genomic_DNA"/>
</dbReference>
<dbReference type="EMBL" id="CM002240">
    <property type="protein sequence ID" value="EAA32040.2"/>
    <property type="molecule type" value="Genomic_DNA"/>
</dbReference>
<dbReference type="PIR" id="S58709">
    <property type="entry name" value="S58709"/>
</dbReference>
<dbReference type="SMR" id="P61859"/>
<dbReference type="STRING" id="367110.P61859"/>
<dbReference type="PaxDb" id="5141-EFNCRP00000003921"/>
<dbReference type="EnsemblFungi" id="EAA32040">
    <property type="protein sequence ID" value="EAA32040"/>
    <property type="gene ID" value="NCU04120"/>
</dbReference>
<dbReference type="KEGG" id="ncr:NCU04120"/>
<dbReference type="VEuPathDB" id="FungiDB:NCU04120"/>
<dbReference type="HOGENOM" id="CLU_061288_2_0_1"/>
<dbReference type="InParanoid" id="P61859"/>
<dbReference type="OMA" id="ARKMKEC"/>
<dbReference type="OrthoDB" id="26525at2759"/>
<dbReference type="Proteomes" id="UP000001805">
    <property type="component" value="Chromosome 2, Linkage Group V"/>
</dbReference>
<dbReference type="GO" id="GO:0051286">
    <property type="term" value="C:cell tip"/>
    <property type="evidence" value="ECO:0000318"/>
    <property type="project" value="GO_Central"/>
</dbReference>
<dbReference type="GO" id="GO:0005823">
    <property type="term" value="C:central plaque of spindle pole body"/>
    <property type="evidence" value="ECO:0000318"/>
    <property type="project" value="GO_Central"/>
</dbReference>
<dbReference type="GO" id="GO:0005737">
    <property type="term" value="C:cytoplasm"/>
    <property type="evidence" value="ECO:0000318"/>
    <property type="project" value="GO_Central"/>
</dbReference>
<dbReference type="GO" id="GO:0005509">
    <property type="term" value="F:calcium ion binding"/>
    <property type="evidence" value="ECO:0000318"/>
    <property type="project" value="GO_Central"/>
</dbReference>
<dbReference type="GO" id="GO:0030234">
    <property type="term" value="F:enzyme regulator activity"/>
    <property type="evidence" value="ECO:0000318"/>
    <property type="project" value="GO_Central"/>
</dbReference>
<dbReference type="GO" id="GO:0000226">
    <property type="term" value="P:microtubule cytoskeleton organization"/>
    <property type="evidence" value="ECO:0000318"/>
    <property type="project" value="GO_Central"/>
</dbReference>
<dbReference type="GO" id="GO:0051300">
    <property type="term" value="P:spindle pole body organization"/>
    <property type="evidence" value="ECO:0000318"/>
    <property type="project" value="GO_Central"/>
</dbReference>
<dbReference type="CDD" id="cd00051">
    <property type="entry name" value="EFh"/>
    <property type="match status" value="2"/>
</dbReference>
<dbReference type="FunFam" id="1.10.238.10:FF:000058">
    <property type="entry name" value="Calmodulin"/>
    <property type="match status" value="1"/>
</dbReference>
<dbReference type="FunFam" id="1.10.238.10:FF:000257">
    <property type="entry name" value="Calmodulin"/>
    <property type="match status" value="1"/>
</dbReference>
<dbReference type="FunFam" id="1.10.238.10:FF:000027">
    <property type="entry name" value="Calmodulin (CaM)"/>
    <property type="match status" value="1"/>
</dbReference>
<dbReference type="Gene3D" id="1.10.238.10">
    <property type="entry name" value="EF-hand"/>
    <property type="match status" value="3"/>
</dbReference>
<dbReference type="InterPro" id="IPR050230">
    <property type="entry name" value="CALM/Myosin/TropC-like"/>
</dbReference>
<dbReference type="InterPro" id="IPR011992">
    <property type="entry name" value="EF-hand-dom_pair"/>
</dbReference>
<dbReference type="InterPro" id="IPR018247">
    <property type="entry name" value="EF_Hand_1_Ca_BS"/>
</dbReference>
<dbReference type="InterPro" id="IPR002048">
    <property type="entry name" value="EF_hand_dom"/>
</dbReference>
<dbReference type="PANTHER" id="PTHR23048:SF0">
    <property type="entry name" value="CALMODULIN LIKE 3"/>
    <property type="match status" value="1"/>
</dbReference>
<dbReference type="PANTHER" id="PTHR23048">
    <property type="entry name" value="MYOSIN LIGHT CHAIN 1, 3"/>
    <property type="match status" value="1"/>
</dbReference>
<dbReference type="Pfam" id="PF13499">
    <property type="entry name" value="EF-hand_7"/>
    <property type="match status" value="2"/>
</dbReference>
<dbReference type="PRINTS" id="PR00450">
    <property type="entry name" value="RECOVERIN"/>
</dbReference>
<dbReference type="SMART" id="SM00054">
    <property type="entry name" value="EFh"/>
    <property type="match status" value="4"/>
</dbReference>
<dbReference type="SMART" id="SM01184">
    <property type="entry name" value="efhand_Ca_insen"/>
    <property type="match status" value="1"/>
</dbReference>
<dbReference type="SUPFAM" id="SSF47473">
    <property type="entry name" value="EF-hand"/>
    <property type="match status" value="1"/>
</dbReference>
<dbReference type="PROSITE" id="PS00018">
    <property type="entry name" value="EF_HAND_1"/>
    <property type="match status" value="4"/>
</dbReference>
<dbReference type="PROSITE" id="PS50222">
    <property type="entry name" value="EF_HAND_2"/>
    <property type="match status" value="4"/>
</dbReference>
<comment type="function">
    <text>Calmodulin mediates the control of a large number of enzymes, ion channels and other proteins by Ca(2+). Among the enzymes to be stimulated by the calmodulin-Ca(2+) complex are a number of protein kinases and phosphatases.</text>
</comment>
<comment type="PTM">
    <text>Trimethylation of Lys-116 observed in other calmodulins is absent here.</text>
</comment>
<comment type="miscellaneous">
    <text>This protein has four functional calcium-binding sites.</text>
</comment>
<comment type="similarity">
    <text evidence="3">Belongs to the calmodulin family.</text>
</comment>
<organism>
    <name type="scientific">Neurospora crassa (strain ATCC 24698 / 74-OR23-1A / CBS 708.71 / DSM 1257 / FGSC 987)</name>
    <dbReference type="NCBI Taxonomy" id="367110"/>
    <lineage>
        <taxon>Eukaryota</taxon>
        <taxon>Fungi</taxon>
        <taxon>Dikarya</taxon>
        <taxon>Ascomycota</taxon>
        <taxon>Pezizomycotina</taxon>
        <taxon>Sordariomycetes</taxon>
        <taxon>Sordariomycetidae</taxon>
        <taxon>Sordariales</taxon>
        <taxon>Sordariaceae</taxon>
        <taxon>Neurospora</taxon>
    </lineage>
</organism>
<sequence>MADSLTEEQVSEFKEAFSLFDKDGDGQITTKELGTVMRSLGQNPSESELQDMINEVDADNNGTIDFPEFLTMMARKMKDTDSEEEIREAFKVFDRDNNGFISAAELRHVMTSIGEKLTDDEVDEMIREADQDGDGRIDYNEFVQLMMQK</sequence>
<reference key="1">
    <citation type="journal article" date="1993" name="Biochim. Biophys. Acta">
        <title>Structure and sequence of the calmodulin gene from Neurospora crassa.</title>
        <authorList>
            <person name="Melnick M.B."/>
            <person name="Melnick C."/>
            <person name="Lee M."/>
            <person name="Woodward D.O."/>
        </authorList>
    </citation>
    <scope>NUCLEOTIDE SEQUENCE [GENOMIC DNA / MRNA]</scope>
</reference>
<reference key="2">
    <citation type="journal article" date="1993" name="FEBS Lett.">
        <title>Molecular cloning of a cDNA encoding calmodulin from Neurospora crassa.</title>
        <authorList>
            <person name="Capelli N."/>
            <person name="van Tuinen D."/>
            <person name="Ortega-Perez R."/>
            <person name="Arrighi J.F."/>
            <person name="Turian G."/>
        </authorList>
    </citation>
    <scope>NUCLEOTIDE SEQUENCE [MRNA]</scope>
</reference>
<reference key="3">
    <citation type="journal article" date="2003" name="Nucleic Acids Res.">
        <title>What's in the genome of a filamentous fungus? Analysis of the Neurospora genome sequence.</title>
        <authorList>
            <person name="Mannhaupt G."/>
            <person name="Montrone C."/>
            <person name="Haase D."/>
            <person name="Mewes H.-W."/>
            <person name="Aign V."/>
            <person name="Hoheisel J.D."/>
            <person name="Fartmann B."/>
            <person name="Nyakatura G."/>
            <person name="Kempken F."/>
            <person name="Maier J."/>
            <person name="Schulte U."/>
        </authorList>
    </citation>
    <scope>NUCLEOTIDE SEQUENCE [LARGE SCALE GENOMIC DNA]</scope>
    <source>
        <strain>ATCC 24698 / 74-OR23-1A / CBS 708.71 / DSM 1257 / FGSC 987</strain>
    </source>
</reference>
<reference key="4">
    <citation type="journal article" date="2003" name="Nature">
        <title>The genome sequence of the filamentous fungus Neurospora crassa.</title>
        <authorList>
            <person name="Galagan J.E."/>
            <person name="Calvo S.E."/>
            <person name="Borkovich K.A."/>
            <person name="Selker E.U."/>
            <person name="Read N.D."/>
            <person name="Jaffe D.B."/>
            <person name="FitzHugh W."/>
            <person name="Ma L.-J."/>
            <person name="Smirnov S."/>
            <person name="Purcell S."/>
            <person name="Rehman B."/>
            <person name="Elkins T."/>
            <person name="Engels R."/>
            <person name="Wang S."/>
            <person name="Nielsen C.B."/>
            <person name="Butler J."/>
            <person name="Endrizzi M."/>
            <person name="Qui D."/>
            <person name="Ianakiev P."/>
            <person name="Bell-Pedersen D."/>
            <person name="Nelson M.A."/>
            <person name="Werner-Washburne M."/>
            <person name="Selitrennikoff C.P."/>
            <person name="Kinsey J.A."/>
            <person name="Braun E.L."/>
            <person name="Zelter A."/>
            <person name="Schulte U."/>
            <person name="Kothe G.O."/>
            <person name="Jedd G."/>
            <person name="Mewes H.-W."/>
            <person name="Staben C."/>
            <person name="Marcotte E."/>
            <person name="Greenberg D."/>
            <person name="Roy A."/>
            <person name="Foley K."/>
            <person name="Naylor J."/>
            <person name="Stange-Thomann N."/>
            <person name="Barrett R."/>
            <person name="Gnerre S."/>
            <person name="Kamal M."/>
            <person name="Kamvysselis M."/>
            <person name="Mauceli E.W."/>
            <person name="Bielke C."/>
            <person name="Rudd S."/>
            <person name="Frishman D."/>
            <person name="Krystofova S."/>
            <person name="Rasmussen C."/>
            <person name="Metzenberg R.L."/>
            <person name="Perkins D.D."/>
            <person name="Kroken S."/>
            <person name="Cogoni C."/>
            <person name="Macino G."/>
            <person name="Catcheside D.E.A."/>
            <person name="Li W."/>
            <person name="Pratt R.J."/>
            <person name="Osmani S.A."/>
            <person name="DeSouza C.P.C."/>
            <person name="Glass N.L."/>
            <person name="Orbach M.J."/>
            <person name="Berglund J.A."/>
            <person name="Voelker R."/>
            <person name="Yarden O."/>
            <person name="Plamann M."/>
            <person name="Seiler S."/>
            <person name="Dunlap J.C."/>
            <person name="Radford A."/>
            <person name="Aramayo R."/>
            <person name="Natvig D.O."/>
            <person name="Alex L.A."/>
            <person name="Mannhaupt G."/>
            <person name="Ebbole D.J."/>
            <person name="Freitag M."/>
            <person name="Paulsen I."/>
            <person name="Sachs M.S."/>
            <person name="Lander E.S."/>
            <person name="Nusbaum C."/>
            <person name="Birren B.W."/>
        </authorList>
    </citation>
    <scope>NUCLEOTIDE SEQUENCE [LARGE SCALE GENOMIC DNA]</scope>
    <source>
        <strain>ATCC 24698 / 74-OR23-1A / CBS 708.71 / DSM 1257 / FGSC 987</strain>
    </source>
</reference>
<reference key="5">
    <citation type="journal article" date="1982" name="J. Biol. Chem.">
        <title>Calmodulin from Neurospora crassa. General properties and conformational changes.</title>
        <authorList>
            <person name="Cox J.A."/>
            <person name="Ferraz C."/>
            <person name="Demaille J.G."/>
            <person name="Perez R.O."/>
            <person name="van Tuinen D."/>
            <person name="Marme D."/>
        </authorList>
    </citation>
    <scope>AMINO-ACID COMPOSITION</scope>
</reference>
<protein>
    <recommendedName>
        <fullName>Calmodulin</fullName>
        <shortName>CaM</shortName>
    </recommendedName>
</protein>
<evidence type="ECO:0000250" key="1"/>
<evidence type="ECO:0000255" key="2">
    <source>
        <dbReference type="PROSITE-ProRule" id="PRU00448"/>
    </source>
</evidence>
<evidence type="ECO:0000305" key="3"/>